<gene>
    <name type="primary">BTT1</name>
    <name type="ORF">SCY_1142</name>
</gene>
<keyword id="KW-0963">Cytoplasm</keyword>
<keyword id="KW-0539">Nucleus</keyword>
<keyword id="KW-0653">Protein transport</keyword>
<keyword id="KW-0678">Repressor</keyword>
<keyword id="KW-0804">Transcription</keyword>
<keyword id="KW-0805">Transcription regulation</keyword>
<keyword id="KW-0813">Transport</keyword>
<feature type="chain" id="PRO_0000310169" description="Nascent polypeptide-associated complex subunit beta-2">
    <location>
        <begin position="1"/>
        <end position="149"/>
    </location>
</feature>
<feature type="domain" description="NAC-A/B" evidence="2">
    <location>
        <begin position="38"/>
        <end position="103"/>
    </location>
</feature>
<sequence length="149" mass="16650">MPVDQEKLAKLHKLSAANKVGGTRRKINKKGNLYNNNDKDNTKLQAELHKLHPMTIENVAEANFFKKNGKVLHFNSAVVQIAPQCNLTMIHGQPKENTLNGLYPSVASQLGSQELEYLTGLAHNLENEQTVLDQLSDRCSETKQQVMNS</sequence>
<organism>
    <name type="scientific">Saccharomyces cerevisiae (strain YJM789)</name>
    <name type="common">Baker's yeast</name>
    <dbReference type="NCBI Taxonomy" id="307796"/>
    <lineage>
        <taxon>Eukaryota</taxon>
        <taxon>Fungi</taxon>
        <taxon>Dikarya</taxon>
        <taxon>Ascomycota</taxon>
        <taxon>Saccharomycotina</taxon>
        <taxon>Saccharomycetes</taxon>
        <taxon>Saccharomycetales</taxon>
        <taxon>Saccharomycetaceae</taxon>
        <taxon>Saccharomyces</taxon>
    </lineage>
</organism>
<comment type="function">
    <text evidence="1">Acts as a component of the nascent polypeptide-associated complex (NAC), which promotes mitochondrial protein import by enhancing productive ribosome interactions with the outer mitochondrial membrane. Also blocks the inappropriate interaction of ribosomes translating non-secretory nascent polypeptides with translocation sites in the membrane of the endoplasmic reticulum. BTT1 may act as a transcription factor that exert a negative effect on the expression of several genes that are transcribed by RNA polymerase II (By similarity).</text>
</comment>
<comment type="subunit">
    <text evidence="1">Part of the nascent polypeptide-associated complex (NAC), consisting of EGD2 and either EGD1 or BTT1. NAC associates with ribosomes via EGD1 or BTT1 (By similarity).</text>
</comment>
<comment type="subcellular location">
    <subcellularLocation>
        <location evidence="1">Cytoplasm</location>
    </subcellularLocation>
    <subcellularLocation>
        <location evidence="1">Nucleus</location>
    </subcellularLocation>
    <text evidence="1">Predominantly cytoplasmic, may also transiently localize to the nucleus.</text>
</comment>
<comment type="similarity">
    <text evidence="3">Belongs to the NAC-beta family.</text>
</comment>
<accession>A6ZYK4</accession>
<protein>
    <recommendedName>
        <fullName>Nascent polypeptide-associated complex subunit beta-2</fullName>
        <shortName>NAC-beta-2</shortName>
    </recommendedName>
    <alternativeName>
        <fullName>BTF3 homolog BTT1</fullName>
    </alternativeName>
    <alternativeName>
        <fullName>Beta-2-NAC</fullName>
    </alternativeName>
</protein>
<reference key="1">
    <citation type="journal article" date="2007" name="Proc. Natl. Acad. Sci. U.S.A.">
        <title>Genome sequencing and comparative analysis of Saccharomyces cerevisiae strain YJM789.</title>
        <authorList>
            <person name="Wei W."/>
            <person name="McCusker J.H."/>
            <person name="Hyman R.W."/>
            <person name="Jones T."/>
            <person name="Ning Y."/>
            <person name="Cao Z."/>
            <person name="Gu Z."/>
            <person name="Bruno D."/>
            <person name="Miranda M."/>
            <person name="Nguyen M."/>
            <person name="Wilhelmy J."/>
            <person name="Komp C."/>
            <person name="Tamse R."/>
            <person name="Wang X."/>
            <person name="Jia P."/>
            <person name="Luedi P."/>
            <person name="Oefner P.J."/>
            <person name="David L."/>
            <person name="Dietrich F.S."/>
            <person name="Li Y."/>
            <person name="Davis R.W."/>
            <person name="Steinmetz L.M."/>
        </authorList>
    </citation>
    <scope>NUCLEOTIDE SEQUENCE [LARGE SCALE GENOMIC DNA]</scope>
    <source>
        <strain>YJM789</strain>
    </source>
</reference>
<evidence type="ECO:0000250" key="1"/>
<evidence type="ECO:0000255" key="2">
    <source>
        <dbReference type="PROSITE-ProRule" id="PRU00507"/>
    </source>
</evidence>
<evidence type="ECO:0000305" key="3"/>
<proteinExistence type="inferred from homology"/>
<dbReference type="EMBL" id="AAFW02000145">
    <property type="protein sequence ID" value="EDN60584.1"/>
    <property type="molecule type" value="Genomic_DNA"/>
</dbReference>
<dbReference type="SMR" id="A6ZYK4"/>
<dbReference type="HOGENOM" id="CLU_098726_2_2_1"/>
<dbReference type="Proteomes" id="UP000007060">
    <property type="component" value="Unassembled WGS sequence"/>
</dbReference>
<dbReference type="GO" id="GO:0005737">
    <property type="term" value="C:cytoplasm"/>
    <property type="evidence" value="ECO:0007669"/>
    <property type="project" value="UniProtKB-SubCell"/>
</dbReference>
<dbReference type="GO" id="GO:0005634">
    <property type="term" value="C:nucleus"/>
    <property type="evidence" value="ECO:0007669"/>
    <property type="project" value="UniProtKB-SubCell"/>
</dbReference>
<dbReference type="GO" id="GO:0015031">
    <property type="term" value="P:protein transport"/>
    <property type="evidence" value="ECO:0007669"/>
    <property type="project" value="UniProtKB-KW"/>
</dbReference>
<dbReference type="CDD" id="cd22055">
    <property type="entry name" value="NAC_BTF3"/>
    <property type="match status" value="1"/>
</dbReference>
<dbReference type="FunFam" id="2.20.70.30:FF:000001">
    <property type="entry name" value="Transcription factor BTF3 homolog"/>
    <property type="match status" value="1"/>
</dbReference>
<dbReference type="Gene3D" id="2.20.70.30">
    <property type="entry name" value="Nascent polypeptide-associated complex domain"/>
    <property type="match status" value="1"/>
</dbReference>
<dbReference type="InterPro" id="IPR039370">
    <property type="entry name" value="BTF3"/>
</dbReference>
<dbReference type="InterPro" id="IPR038187">
    <property type="entry name" value="NAC_A/B_dom_sf"/>
</dbReference>
<dbReference type="InterPro" id="IPR002715">
    <property type="entry name" value="Nas_poly-pep-assoc_cplx_dom"/>
</dbReference>
<dbReference type="PANTHER" id="PTHR10351">
    <property type="entry name" value="TRANSCRIPTION FACTOR BTF3 FAMILY MEMBER"/>
    <property type="match status" value="1"/>
</dbReference>
<dbReference type="Pfam" id="PF01849">
    <property type="entry name" value="NAC"/>
    <property type="match status" value="1"/>
</dbReference>
<dbReference type="SMART" id="SM01407">
    <property type="entry name" value="NAC"/>
    <property type="match status" value="1"/>
</dbReference>
<dbReference type="PROSITE" id="PS51151">
    <property type="entry name" value="NAC_AB"/>
    <property type="match status" value="1"/>
</dbReference>
<name>NACB2_YEAS7</name>